<proteinExistence type="inferred from homology"/>
<protein>
    <recommendedName>
        <fullName evidence="1">Nitrogenase iron protein</fullName>
        <ecNumber evidence="1">1.18.6.1</ecNumber>
    </recommendedName>
    <alternativeName>
        <fullName evidence="1">Nitrogenase Fe protein</fullName>
    </alternativeName>
    <alternativeName>
        <fullName evidence="1">Nitrogenase component II</fullName>
    </alternativeName>
    <alternativeName>
        <fullName evidence="1">Nitrogenase reductase</fullName>
    </alternativeName>
</protein>
<reference key="1">
    <citation type="journal article" date="2016" name="Stand. Genomic Sci.">
        <title>Complete genome sequence of Methanospirillum hungatei type strain JF1.</title>
        <authorList>
            <person name="Gunsalus R.P."/>
            <person name="Cook L.E."/>
            <person name="Crable B."/>
            <person name="Rohlin L."/>
            <person name="McDonald E."/>
            <person name="Mouttaki H."/>
            <person name="Sieber J.R."/>
            <person name="Poweleit N."/>
            <person name="Zhou H."/>
            <person name="Lapidus A.L."/>
            <person name="Daligault H.E."/>
            <person name="Land M."/>
            <person name="Gilna P."/>
            <person name="Ivanova N."/>
            <person name="Kyrpides N."/>
            <person name="Culley D.E."/>
            <person name="McInerney M.J."/>
        </authorList>
    </citation>
    <scope>NUCLEOTIDE SEQUENCE [LARGE SCALE GENOMIC DNA]</scope>
    <source>
        <strain>ATCC 27890 / DSM 864 / NBRC 100397 / JF-1</strain>
    </source>
</reference>
<organism>
    <name type="scientific">Methanospirillum hungatei JF-1 (strain ATCC 27890 / DSM 864 / NBRC 100397 / JF-1)</name>
    <dbReference type="NCBI Taxonomy" id="323259"/>
    <lineage>
        <taxon>Archaea</taxon>
        <taxon>Methanobacteriati</taxon>
        <taxon>Methanobacteriota</taxon>
        <taxon>Stenosarchaea group</taxon>
        <taxon>Methanomicrobia</taxon>
        <taxon>Methanomicrobiales</taxon>
        <taxon>Methanospirillaceae</taxon>
        <taxon>Methanospirillum</taxon>
    </lineage>
</organism>
<name>NIFH_METHJ</name>
<sequence length="280" mass="30372">MKQIALYGKGGIGKSTTSANLSAALVNRGLSVMQIGCDPKRDSTRMLMKGILIPTVLDLIRERGEENLTLDDVVFTGYKGVRCVEAGGPEPGVGCAGRGIIATFQLLERLSAFDEDIIVYDVLGDVVCGGFAMPMRKGYAQEIYLVTSGELMSLYAANNICKAISRISQNVRQVCRLGGVICNSRNLPDEEKLVGAFASEVGSKIIAYIPRSGLVQYAELNNQTVIEFAPDSSLSATYQSLAEEIMTNTDFVIPKPLEIEELEKLARSYLPTIDHQGINH</sequence>
<feature type="chain" id="PRO_1000211874" description="Nitrogenase iron protein">
    <location>
        <begin position="1"/>
        <end position="280"/>
    </location>
</feature>
<feature type="binding site" evidence="1">
    <location>
        <begin position="8"/>
        <end position="15"/>
    </location>
    <ligand>
        <name>ATP</name>
        <dbReference type="ChEBI" id="CHEBI:30616"/>
    </ligand>
</feature>
<feature type="binding site" evidence="1">
    <location>
        <position position="95"/>
    </location>
    <ligand>
        <name>[4Fe-4S] cluster</name>
        <dbReference type="ChEBI" id="CHEBI:49883"/>
        <note>ligand shared between dimeric partners</note>
    </ligand>
</feature>
<feature type="binding site" evidence="1">
    <location>
        <position position="128"/>
    </location>
    <ligand>
        <name>[4Fe-4S] cluster</name>
        <dbReference type="ChEBI" id="CHEBI:49883"/>
        <note>ligand shared between dimeric partners</note>
    </ligand>
</feature>
<feature type="modified residue" description="ADP-ribosylarginine; by dinitrogenase reductase ADP-ribosyltransferase" evidence="1">
    <location>
        <position position="98"/>
    </location>
</feature>
<accession>Q2FUB7</accession>
<comment type="function">
    <text evidence="1">The key enzymatic reactions in nitrogen fixation are catalyzed by the nitrogenase complex, which has 2 components: the iron protein and the molybdenum-iron protein.</text>
</comment>
<comment type="catalytic activity">
    <reaction evidence="1">
        <text>N2 + 8 reduced [2Fe-2S]-[ferredoxin] + 16 ATP + 16 H2O = H2 + 8 oxidized [2Fe-2S]-[ferredoxin] + 2 NH4(+) + 16 ADP + 16 phosphate + 6 H(+)</text>
        <dbReference type="Rhea" id="RHEA:21448"/>
        <dbReference type="Rhea" id="RHEA-COMP:10000"/>
        <dbReference type="Rhea" id="RHEA-COMP:10001"/>
        <dbReference type="ChEBI" id="CHEBI:15377"/>
        <dbReference type="ChEBI" id="CHEBI:15378"/>
        <dbReference type="ChEBI" id="CHEBI:17997"/>
        <dbReference type="ChEBI" id="CHEBI:18276"/>
        <dbReference type="ChEBI" id="CHEBI:28938"/>
        <dbReference type="ChEBI" id="CHEBI:30616"/>
        <dbReference type="ChEBI" id="CHEBI:33737"/>
        <dbReference type="ChEBI" id="CHEBI:33738"/>
        <dbReference type="ChEBI" id="CHEBI:43474"/>
        <dbReference type="ChEBI" id="CHEBI:456216"/>
        <dbReference type="EC" id="1.18.6.1"/>
    </reaction>
</comment>
<comment type="cofactor">
    <cofactor evidence="1">
        <name>[4Fe-4S] cluster</name>
        <dbReference type="ChEBI" id="CHEBI:49883"/>
    </cofactor>
    <text evidence="1">Binds 1 [4Fe-4S] cluster per dimer.</text>
</comment>
<comment type="subunit">
    <text evidence="1">Homodimer.</text>
</comment>
<comment type="PTM">
    <text evidence="1">The reversible ADP-ribosylation of Arg-98 inactivates the nitrogenase reductase and regulates nitrogenase activity.</text>
</comment>
<comment type="similarity">
    <text evidence="1">Belongs to the NifH/BchL/ChlL family.</text>
</comment>
<dbReference type="EC" id="1.18.6.1" evidence="1"/>
<dbReference type="EMBL" id="CP000254">
    <property type="protein sequence ID" value="ABD40545.1"/>
    <property type="molecule type" value="Genomic_DNA"/>
</dbReference>
<dbReference type="RefSeq" id="WP_011447824.1">
    <property type="nucleotide sequence ID" value="NC_007796.1"/>
</dbReference>
<dbReference type="SMR" id="Q2FUB7"/>
<dbReference type="STRING" id="323259.Mhun_0793"/>
<dbReference type="EnsemblBacteria" id="ABD40545">
    <property type="protein sequence ID" value="ABD40545"/>
    <property type="gene ID" value="Mhun_0793"/>
</dbReference>
<dbReference type="GeneID" id="3924521"/>
<dbReference type="KEGG" id="mhu:Mhun_0793"/>
<dbReference type="eggNOG" id="arCOG00590">
    <property type="taxonomic scope" value="Archaea"/>
</dbReference>
<dbReference type="HOGENOM" id="CLU_059373_0_0_2"/>
<dbReference type="InParanoid" id="Q2FUB7"/>
<dbReference type="OrthoDB" id="145464at2157"/>
<dbReference type="Proteomes" id="UP000001941">
    <property type="component" value="Chromosome"/>
</dbReference>
<dbReference type="GO" id="GO:0051539">
    <property type="term" value="F:4 iron, 4 sulfur cluster binding"/>
    <property type="evidence" value="ECO:0007669"/>
    <property type="project" value="UniProtKB-KW"/>
</dbReference>
<dbReference type="GO" id="GO:0005524">
    <property type="term" value="F:ATP binding"/>
    <property type="evidence" value="ECO:0007669"/>
    <property type="project" value="UniProtKB-UniRule"/>
</dbReference>
<dbReference type="GO" id="GO:0046872">
    <property type="term" value="F:metal ion binding"/>
    <property type="evidence" value="ECO:0007669"/>
    <property type="project" value="UniProtKB-KW"/>
</dbReference>
<dbReference type="GO" id="GO:0016163">
    <property type="term" value="F:nitrogenase activity"/>
    <property type="evidence" value="ECO:0007669"/>
    <property type="project" value="UniProtKB-UniRule"/>
</dbReference>
<dbReference type="GO" id="GO:0009399">
    <property type="term" value="P:nitrogen fixation"/>
    <property type="evidence" value="ECO:0007669"/>
    <property type="project" value="UniProtKB-UniRule"/>
</dbReference>
<dbReference type="CDD" id="cd02040">
    <property type="entry name" value="NifH"/>
    <property type="match status" value="1"/>
</dbReference>
<dbReference type="Gene3D" id="3.40.50.300">
    <property type="entry name" value="P-loop containing nucleotide triphosphate hydrolases"/>
    <property type="match status" value="1"/>
</dbReference>
<dbReference type="HAMAP" id="MF_00533">
    <property type="entry name" value="NifH"/>
    <property type="match status" value="1"/>
</dbReference>
<dbReference type="InterPro" id="IPR030655">
    <property type="entry name" value="NifH/chlL_CS"/>
</dbReference>
<dbReference type="InterPro" id="IPR000392">
    <property type="entry name" value="NifH/frxC"/>
</dbReference>
<dbReference type="InterPro" id="IPR005977">
    <property type="entry name" value="Nitrogenase_Fe_NifH"/>
</dbReference>
<dbReference type="InterPro" id="IPR027417">
    <property type="entry name" value="P-loop_NTPase"/>
</dbReference>
<dbReference type="NCBIfam" id="NF033200">
    <property type="entry name" value="F430_CfbC"/>
    <property type="match status" value="1"/>
</dbReference>
<dbReference type="PANTHER" id="PTHR42864">
    <property type="entry name" value="LIGHT-INDEPENDENT PROTOCHLOROPHYLLIDE REDUCTASE IRON-SULFUR ATP-BINDING PROTEIN"/>
    <property type="match status" value="1"/>
</dbReference>
<dbReference type="PANTHER" id="PTHR42864:SF2">
    <property type="entry name" value="LIGHT-INDEPENDENT PROTOCHLOROPHYLLIDE REDUCTASE IRON-SULFUR ATP-BINDING PROTEIN"/>
    <property type="match status" value="1"/>
</dbReference>
<dbReference type="Pfam" id="PF00142">
    <property type="entry name" value="Fer4_NifH"/>
    <property type="match status" value="1"/>
</dbReference>
<dbReference type="PIRSF" id="PIRSF000363">
    <property type="entry name" value="Nitrogenase_iron"/>
    <property type="match status" value="1"/>
</dbReference>
<dbReference type="PRINTS" id="PR00091">
    <property type="entry name" value="NITROGNASEII"/>
</dbReference>
<dbReference type="SUPFAM" id="SSF52540">
    <property type="entry name" value="P-loop containing nucleoside triphosphate hydrolases"/>
    <property type="match status" value="1"/>
</dbReference>
<dbReference type="PROSITE" id="PS00746">
    <property type="entry name" value="NIFH_FRXC_1"/>
    <property type="match status" value="1"/>
</dbReference>
<dbReference type="PROSITE" id="PS00692">
    <property type="entry name" value="NIFH_FRXC_2"/>
    <property type="match status" value="1"/>
</dbReference>
<dbReference type="PROSITE" id="PS51026">
    <property type="entry name" value="NIFH_FRXC_3"/>
    <property type="match status" value="1"/>
</dbReference>
<evidence type="ECO:0000255" key="1">
    <source>
        <dbReference type="HAMAP-Rule" id="MF_00533"/>
    </source>
</evidence>
<keyword id="KW-0004">4Fe-4S</keyword>
<keyword id="KW-0013">ADP-ribosylation</keyword>
<keyword id="KW-0067">ATP-binding</keyword>
<keyword id="KW-0408">Iron</keyword>
<keyword id="KW-0411">Iron-sulfur</keyword>
<keyword id="KW-0479">Metal-binding</keyword>
<keyword id="KW-0535">Nitrogen fixation</keyword>
<keyword id="KW-0547">Nucleotide-binding</keyword>
<keyword id="KW-0560">Oxidoreductase</keyword>
<keyword id="KW-1185">Reference proteome</keyword>
<gene>
    <name evidence="1" type="primary">nifH</name>
    <name type="ordered locus">Mhun_0793</name>
</gene>